<organism>
    <name type="scientific">Pyrococcus horikoshii (strain ATCC 700860 / DSM 12428 / JCM 9974 / NBRC 100139 / OT-3)</name>
    <dbReference type="NCBI Taxonomy" id="70601"/>
    <lineage>
        <taxon>Archaea</taxon>
        <taxon>Methanobacteriati</taxon>
        <taxon>Methanobacteriota</taxon>
        <taxon>Thermococci</taxon>
        <taxon>Thermococcales</taxon>
        <taxon>Thermococcaceae</taxon>
        <taxon>Pyrococcus</taxon>
    </lineage>
</organism>
<name>PYRDB_PYRHO</name>
<reference key="1">
    <citation type="journal article" date="1998" name="DNA Res.">
        <title>Complete sequence and gene organization of the genome of a hyper-thermophilic archaebacterium, Pyrococcus horikoshii OT3.</title>
        <authorList>
            <person name="Kawarabayasi Y."/>
            <person name="Sawada M."/>
            <person name="Horikawa H."/>
            <person name="Haikawa Y."/>
            <person name="Hino Y."/>
            <person name="Yamamoto S."/>
            <person name="Sekine M."/>
            <person name="Baba S."/>
            <person name="Kosugi H."/>
            <person name="Hosoyama A."/>
            <person name="Nagai Y."/>
            <person name="Sakai M."/>
            <person name="Ogura K."/>
            <person name="Otsuka R."/>
            <person name="Nakazawa H."/>
            <person name="Takamiya M."/>
            <person name="Ohfuku Y."/>
            <person name="Funahashi T."/>
            <person name="Tanaka T."/>
            <person name="Kudoh Y."/>
            <person name="Yamazaki J."/>
            <person name="Kushida N."/>
            <person name="Oguchi A."/>
            <person name="Aoki K."/>
            <person name="Yoshizawa T."/>
            <person name="Nakamura Y."/>
            <person name="Robb F.T."/>
            <person name="Horikoshi K."/>
            <person name="Masuchi Y."/>
            <person name="Shizuya H."/>
            <person name="Kikuchi H."/>
        </authorList>
    </citation>
    <scope>NUCLEOTIDE SEQUENCE [LARGE SCALE GENOMIC DNA]</scope>
    <source>
        <strain>ATCC 700860 / DSM 12428 / JCM 9974 / NBRC 100139 / OT-3</strain>
    </source>
</reference>
<protein>
    <recommendedName>
        <fullName>Dihydroorotate dehydrogenase B (NAD(+)), catalytic subunit</fullName>
        <shortName>DHOD B</shortName>
        <shortName>DHODase B</shortName>
        <shortName>DHOdehase B</shortName>
        <ecNumber>1.3.1.14</ecNumber>
    </recommendedName>
    <alternativeName>
        <fullName>Dihydroorotate oxidase B</fullName>
    </alternativeName>
    <alternativeName>
        <fullName>Orotate reductase (NADH)</fullName>
    </alternativeName>
</protein>
<gene>
    <name type="primary">pyrD</name>
    <name type="ordered locus">PH1516</name>
</gene>
<sequence length="303" mass="32700">MVKRMLEVKLFGIRFENPLILASGVVDMTPELLRRAHNEGAGGVVTKSIGKEPRKGYDNPTIVELPYGLINAMGLPNPGWEAFLNEFIDERFDFPVIVSIFGGTPEEFAFLAEKLEPVADAFELNLSCPHAKGYGMEIGQDPKNVYEVVKAVKDVTDKPVIAKLTPNVNDITKLGLAAERGGADGVSAINTVKAIAIDIYAKRPILSNKVGGYSGPGIKPIALRAVYDLAKVLDIPVIGIGGITSWRDAVEFLLAGASALQIGTAVYLRGFKVFKEISNGIIEYLKEEGFSSIRDIIGLALKV</sequence>
<proteinExistence type="inferred from homology"/>
<keyword id="KW-0963">Cytoplasm</keyword>
<keyword id="KW-0285">Flavoprotein</keyword>
<keyword id="KW-0288">FMN</keyword>
<keyword id="KW-0520">NAD</keyword>
<keyword id="KW-0560">Oxidoreductase</keyword>
<keyword id="KW-0665">Pyrimidine biosynthesis</keyword>
<accession>O59185</accession>
<evidence type="ECO:0000250" key="1"/>
<evidence type="ECO:0000305" key="2"/>
<comment type="function">
    <text evidence="1">Catalyzes the conversion of dihydroorotate to orotate with NAD(+) as electron acceptor.</text>
</comment>
<comment type="catalytic activity">
    <reaction>
        <text>(S)-dihydroorotate + NAD(+) = orotate + NADH + H(+)</text>
        <dbReference type="Rhea" id="RHEA:13513"/>
        <dbReference type="ChEBI" id="CHEBI:15378"/>
        <dbReference type="ChEBI" id="CHEBI:30839"/>
        <dbReference type="ChEBI" id="CHEBI:30864"/>
        <dbReference type="ChEBI" id="CHEBI:57540"/>
        <dbReference type="ChEBI" id="CHEBI:57945"/>
        <dbReference type="EC" id="1.3.1.14"/>
    </reaction>
</comment>
<comment type="cofactor">
    <cofactor evidence="1">
        <name>FMN</name>
        <dbReference type="ChEBI" id="CHEBI:58210"/>
    </cofactor>
    <text evidence="1">Binds 1 FMN per subunit.</text>
</comment>
<comment type="pathway">
    <text>Pyrimidine metabolism; UMP biosynthesis via de novo pathway; orotate from (S)-dihydroorotate (NAD(+) route): step 1/1.</text>
</comment>
<comment type="subunit">
    <text evidence="1">Heterotetramer of 2 PyrK and 2 PyrD type B subunits.</text>
</comment>
<comment type="subcellular location">
    <subcellularLocation>
        <location evidence="1">Cytoplasm</location>
    </subcellularLocation>
</comment>
<comment type="similarity">
    <text evidence="2">Belongs to the dihydroorotate dehydrogenase family. Type 1 subfamily.</text>
</comment>
<dbReference type="EC" id="1.3.1.14"/>
<dbReference type="EMBL" id="BA000001">
    <property type="protein sequence ID" value="BAA30624.1"/>
    <property type="molecule type" value="Genomic_DNA"/>
</dbReference>
<dbReference type="PIR" id="H71027">
    <property type="entry name" value="H71027"/>
</dbReference>
<dbReference type="SMR" id="O59185"/>
<dbReference type="STRING" id="70601.gene:9378498"/>
<dbReference type="EnsemblBacteria" id="BAA30624">
    <property type="protein sequence ID" value="BAA30624"/>
    <property type="gene ID" value="BAA30624"/>
</dbReference>
<dbReference type="KEGG" id="pho:PH1516"/>
<dbReference type="eggNOG" id="arCOG00603">
    <property type="taxonomic scope" value="Archaea"/>
</dbReference>
<dbReference type="UniPathway" id="UPA00070">
    <property type="reaction ID" value="UER00945"/>
</dbReference>
<dbReference type="Proteomes" id="UP000000752">
    <property type="component" value="Chromosome"/>
</dbReference>
<dbReference type="GO" id="GO:0005737">
    <property type="term" value="C:cytoplasm"/>
    <property type="evidence" value="ECO:0007669"/>
    <property type="project" value="UniProtKB-SubCell"/>
</dbReference>
<dbReference type="GO" id="GO:0004589">
    <property type="term" value="F:dihydroorotate dehydrogenase (NAD+) activity"/>
    <property type="evidence" value="ECO:0007669"/>
    <property type="project" value="UniProtKB-EC"/>
</dbReference>
<dbReference type="GO" id="GO:0006207">
    <property type="term" value="P:'de novo' pyrimidine nucleobase biosynthetic process"/>
    <property type="evidence" value="ECO:0007669"/>
    <property type="project" value="InterPro"/>
</dbReference>
<dbReference type="GO" id="GO:0044205">
    <property type="term" value="P:'de novo' UMP biosynthetic process"/>
    <property type="evidence" value="ECO:0007669"/>
    <property type="project" value="UniProtKB-UniRule"/>
</dbReference>
<dbReference type="CDD" id="cd04740">
    <property type="entry name" value="DHOD_1B_like"/>
    <property type="match status" value="1"/>
</dbReference>
<dbReference type="FunFam" id="3.20.20.70:FF:000027">
    <property type="entry name" value="Dihydropyrimidine dehydrogenase [NADP(+)]"/>
    <property type="match status" value="1"/>
</dbReference>
<dbReference type="Gene3D" id="3.20.20.70">
    <property type="entry name" value="Aldolase class I"/>
    <property type="match status" value="1"/>
</dbReference>
<dbReference type="HAMAP" id="MF_00224">
    <property type="entry name" value="DHO_dh_type1"/>
    <property type="match status" value="1"/>
</dbReference>
<dbReference type="InterPro" id="IPR013785">
    <property type="entry name" value="Aldolase_TIM"/>
</dbReference>
<dbReference type="InterPro" id="IPR033888">
    <property type="entry name" value="DHOD_1B"/>
</dbReference>
<dbReference type="InterPro" id="IPR024920">
    <property type="entry name" value="Dihydroorotate_DH_1"/>
</dbReference>
<dbReference type="InterPro" id="IPR012135">
    <property type="entry name" value="Dihydroorotate_DH_1_2"/>
</dbReference>
<dbReference type="InterPro" id="IPR005720">
    <property type="entry name" value="Dihydroorotate_DH_cat"/>
</dbReference>
<dbReference type="InterPro" id="IPR001295">
    <property type="entry name" value="Dihydroorotate_DH_CS"/>
</dbReference>
<dbReference type="InterPro" id="IPR049622">
    <property type="entry name" value="Dihydroorotate_DH_I"/>
</dbReference>
<dbReference type="NCBIfam" id="NF005574">
    <property type="entry name" value="PRK07259.1"/>
    <property type="match status" value="1"/>
</dbReference>
<dbReference type="NCBIfam" id="TIGR01037">
    <property type="entry name" value="pyrD_sub1_fam"/>
    <property type="match status" value="1"/>
</dbReference>
<dbReference type="PANTHER" id="PTHR43073">
    <property type="entry name" value="DIHYDROPYRIMIDINE DEHYDROGENASE [NADP(+)]"/>
    <property type="match status" value="1"/>
</dbReference>
<dbReference type="PANTHER" id="PTHR43073:SF2">
    <property type="entry name" value="DIHYDROPYRIMIDINE DEHYDROGENASE [NADP(+)]"/>
    <property type="match status" value="1"/>
</dbReference>
<dbReference type="Pfam" id="PF01180">
    <property type="entry name" value="DHO_dh"/>
    <property type="match status" value="1"/>
</dbReference>
<dbReference type="PIRSF" id="PIRSF000164">
    <property type="entry name" value="DHO_oxidase"/>
    <property type="match status" value="1"/>
</dbReference>
<dbReference type="SUPFAM" id="SSF51395">
    <property type="entry name" value="FMN-linked oxidoreductases"/>
    <property type="match status" value="1"/>
</dbReference>
<dbReference type="PROSITE" id="PS00911">
    <property type="entry name" value="DHODEHASE_1"/>
    <property type="match status" value="1"/>
</dbReference>
<dbReference type="PROSITE" id="PS00912">
    <property type="entry name" value="DHODEHASE_2"/>
    <property type="match status" value="1"/>
</dbReference>
<feature type="chain" id="PRO_0000148414" description="Dihydroorotate dehydrogenase B (NAD(+)), catalytic subunit">
    <location>
        <begin position="1"/>
        <end position="303"/>
    </location>
</feature>
<feature type="active site" description="Nucleophile">
    <location>
        <position position="128"/>
    </location>
</feature>
<feature type="binding site" evidence="1">
    <location>
        <position position="23"/>
    </location>
    <ligand>
        <name>FMN</name>
        <dbReference type="ChEBI" id="CHEBI:58210"/>
    </ligand>
</feature>
<feature type="binding site" evidence="1">
    <location>
        <begin position="47"/>
        <end position="48"/>
    </location>
    <ligand>
        <name>FMN</name>
        <dbReference type="ChEBI" id="CHEBI:58210"/>
    </ligand>
</feature>
<feature type="binding site" evidence="1">
    <location>
        <position position="47"/>
    </location>
    <ligand>
        <name>substrate</name>
    </ligand>
</feature>
<feature type="binding site" evidence="1">
    <location>
        <begin position="71"/>
        <end position="75"/>
    </location>
    <ligand>
        <name>substrate</name>
    </ligand>
</feature>
<feature type="binding site" evidence="1">
    <location>
        <position position="125"/>
    </location>
    <ligand>
        <name>FMN</name>
        <dbReference type="ChEBI" id="CHEBI:58210"/>
    </ligand>
</feature>
<feature type="binding site" evidence="1">
    <location>
        <position position="125"/>
    </location>
    <ligand>
        <name>substrate</name>
    </ligand>
</feature>
<feature type="binding site" evidence="1">
    <location>
        <position position="163"/>
    </location>
    <ligand>
        <name>FMN</name>
        <dbReference type="ChEBI" id="CHEBI:58210"/>
    </ligand>
</feature>
<feature type="binding site" evidence="1">
    <location>
        <position position="189"/>
    </location>
    <ligand>
        <name>FMN</name>
        <dbReference type="ChEBI" id="CHEBI:58210"/>
    </ligand>
</feature>
<feature type="binding site" evidence="1">
    <location>
        <begin position="190"/>
        <end position="191"/>
    </location>
    <ligand>
        <name>substrate</name>
    </ligand>
</feature>
<feature type="binding site" evidence="1">
    <location>
        <position position="215"/>
    </location>
    <ligand>
        <name>FMN</name>
        <dbReference type="ChEBI" id="CHEBI:58210"/>
    </ligand>
</feature>
<feature type="binding site" evidence="1">
    <location>
        <begin position="241"/>
        <end position="242"/>
    </location>
    <ligand>
        <name>FMN</name>
        <dbReference type="ChEBI" id="CHEBI:58210"/>
    </ligand>
</feature>
<feature type="binding site" evidence="1">
    <location>
        <begin position="263"/>
        <end position="264"/>
    </location>
    <ligand>
        <name>FMN</name>
        <dbReference type="ChEBI" id="CHEBI:58210"/>
    </ligand>
</feature>